<keyword id="KW-0067">ATP-binding</keyword>
<keyword id="KW-0460">Magnesium</keyword>
<keyword id="KW-0479">Metal-binding</keyword>
<keyword id="KW-0547">Nucleotide-binding</keyword>
<keyword id="KW-0548">Nucleotidyltransferase</keyword>
<keyword id="KW-0692">RNA repair</keyword>
<keyword id="KW-0694">RNA-binding</keyword>
<keyword id="KW-0808">Transferase</keyword>
<keyword id="KW-0819">tRNA processing</keyword>
<sequence length="393" mass="45147">MNDVFLKALPVLQKLTTAGFEAYFVGGSVRDYLLNRTISDVDIATSAFPEEVKEIFQTSYDTGIAHGTVTVRENNEFYEVTTFRTEGTYEDFRRPSEVTFIRSLEEDLKRRDFTMNAIAMDEHFALHDPFSGQLAIQNKEIKAVGKASERFHEDALRMMRAVRFLSQLDFELDKETEKALESQIELLQHTSVERMTVEWIKMMKGKAAKRAIELLLKVKMETYLPGLKDEKPALSEFASWDWEKRTTEESIWLGLVVAVKPNNVNAFLKAWKLPNKTIQLVNKAYQDALKMKETWLTDELYHAGKAVFSLVNELNVIRGQENNQHKLSQAYEALPIHSKKDLAITGADLLKWSGESAGPWVKETLDKVECGVLSNEINNEKIQIKRWLGYHEE</sequence>
<reference key="1">
    <citation type="journal article" date="2011" name="J. Bacteriol.">
        <title>Genome sequence of lineage III Listeria monocytogenes strain HCC23.</title>
        <authorList>
            <person name="Steele C.L."/>
            <person name="Donaldson J.R."/>
            <person name="Paul D."/>
            <person name="Banes M.M."/>
            <person name="Arick T."/>
            <person name="Bridges S.M."/>
            <person name="Lawrence M.L."/>
        </authorList>
    </citation>
    <scope>NUCLEOTIDE SEQUENCE [LARGE SCALE GENOMIC DNA]</scope>
    <source>
        <strain>HCC23</strain>
    </source>
</reference>
<comment type="function">
    <text evidence="1">Catalyzes the addition and repair of the essential 3'-terminal CCA sequence in tRNAs without using a nucleic acid template. Adds these three nucleotides in the order of C, C, and A to the tRNA nucleotide-73, using CTP and ATP as substrates and producing inorganic pyrophosphate. tRNA 3'-terminal CCA addition is required both for tRNA processing and repair. Also involved in tRNA surveillance by mediating tandem CCA addition to generate a CCACCA at the 3' terminus of unstable tRNAs. While stable tRNAs receive only 3'-terminal CCA, unstable tRNAs are marked with CCACCA and rapidly degraded.</text>
</comment>
<comment type="catalytic activity">
    <reaction evidence="1">
        <text>a tRNA precursor + 2 CTP + ATP = a tRNA with a 3' CCA end + 3 diphosphate</text>
        <dbReference type="Rhea" id="RHEA:14433"/>
        <dbReference type="Rhea" id="RHEA-COMP:10465"/>
        <dbReference type="Rhea" id="RHEA-COMP:10468"/>
        <dbReference type="ChEBI" id="CHEBI:30616"/>
        <dbReference type="ChEBI" id="CHEBI:33019"/>
        <dbReference type="ChEBI" id="CHEBI:37563"/>
        <dbReference type="ChEBI" id="CHEBI:74896"/>
        <dbReference type="ChEBI" id="CHEBI:83071"/>
        <dbReference type="EC" id="2.7.7.72"/>
    </reaction>
</comment>
<comment type="catalytic activity">
    <reaction evidence="1">
        <text>a tRNA with a 3' CCA end + 2 CTP + ATP = a tRNA with a 3' CCACCA end + 3 diphosphate</text>
        <dbReference type="Rhea" id="RHEA:76235"/>
        <dbReference type="Rhea" id="RHEA-COMP:10468"/>
        <dbReference type="Rhea" id="RHEA-COMP:18655"/>
        <dbReference type="ChEBI" id="CHEBI:30616"/>
        <dbReference type="ChEBI" id="CHEBI:33019"/>
        <dbReference type="ChEBI" id="CHEBI:37563"/>
        <dbReference type="ChEBI" id="CHEBI:83071"/>
        <dbReference type="ChEBI" id="CHEBI:195187"/>
    </reaction>
    <physiologicalReaction direction="left-to-right" evidence="1">
        <dbReference type="Rhea" id="RHEA:76236"/>
    </physiologicalReaction>
</comment>
<comment type="cofactor">
    <cofactor evidence="1">
        <name>Mg(2+)</name>
        <dbReference type="ChEBI" id="CHEBI:18420"/>
    </cofactor>
</comment>
<comment type="subunit">
    <text evidence="1">Homodimer.</text>
</comment>
<comment type="miscellaneous">
    <text evidence="1">A single active site specifically recognizes both ATP and CTP and is responsible for their addition.</text>
</comment>
<comment type="similarity">
    <text evidence="1">Belongs to the tRNA nucleotidyltransferase/poly(A) polymerase family. Bacterial CCA-adding enzyme type 3 subfamily.</text>
</comment>
<accession>B8DC21</accession>
<protein>
    <recommendedName>
        <fullName evidence="1">CCA-adding enzyme</fullName>
        <ecNumber evidence="1">2.7.7.72</ecNumber>
    </recommendedName>
    <alternativeName>
        <fullName evidence="1">CCA tRNA nucleotidyltransferase</fullName>
    </alternativeName>
    <alternativeName>
        <fullName evidence="1">tRNA CCA-pyrophosphorylase</fullName>
    </alternativeName>
    <alternativeName>
        <fullName evidence="1">tRNA adenylyl-/cytidylyl- transferase</fullName>
    </alternativeName>
    <alternativeName>
        <fullName evidence="1">tRNA nucleotidyltransferase</fullName>
    </alternativeName>
    <alternativeName>
        <fullName evidence="1">tRNA-NT</fullName>
    </alternativeName>
</protein>
<dbReference type="EC" id="2.7.7.72" evidence="1"/>
<dbReference type="EMBL" id="CP001175">
    <property type="protein sequence ID" value="ACK39007.1"/>
    <property type="molecule type" value="Genomic_DNA"/>
</dbReference>
<dbReference type="RefSeq" id="WP_012581078.1">
    <property type="nucleotide sequence ID" value="NC_011660.1"/>
</dbReference>
<dbReference type="SMR" id="B8DC21"/>
<dbReference type="KEGG" id="lmh:LMHCC_0652"/>
<dbReference type="HOGENOM" id="CLU_015961_3_0_9"/>
<dbReference type="GO" id="GO:0005524">
    <property type="term" value="F:ATP binding"/>
    <property type="evidence" value="ECO:0007669"/>
    <property type="project" value="UniProtKB-UniRule"/>
</dbReference>
<dbReference type="GO" id="GO:0004810">
    <property type="term" value="F:CCA tRNA nucleotidyltransferase activity"/>
    <property type="evidence" value="ECO:0007669"/>
    <property type="project" value="UniProtKB-UniRule"/>
</dbReference>
<dbReference type="GO" id="GO:0000287">
    <property type="term" value="F:magnesium ion binding"/>
    <property type="evidence" value="ECO:0007669"/>
    <property type="project" value="UniProtKB-UniRule"/>
</dbReference>
<dbReference type="GO" id="GO:0000049">
    <property type="term" value="F:tRNA binding"/>
    <property type="evidence" value="ECO:0007669"/>
    <property type="project" value="UniProtKB-UniRule"/>
</dbReference>
<dbReference type="GO" id="GO:0042245">
    <property type="term" value="P:RNA repair"/>
    <property type="evidence" value="ECO:0007669"/>
    <property type="project" value="UniProtKB-KW"/>
</dbReference>
<dbReference type="GO" id="GO:0001680">
    <property type="term" value="P:tRNA 3'-terminal CCA addition"/>
    <property type="evidence" value="ECO:0007669"/>
    <property type="project" value="UniProtKB-UniRule"/>
</dbReference>
<dbReference type="CDD" id="cd05398">
    <property type="entry name" value="NT_ClassII-CCAase"/>
    <property type="match status" value="1"/>
</dbReference>
<dbReference type="FunFam" id="3.30.460.10:FF:000057">
    <property type="entry name" value="CCA-adding enzyme"/>
    <property type="match status" value="1"/>
</dbReference>
<dbReference type="Gene3D" id="1.10.110.30">
    <property type="match status" value="1"/>
</dbReference>
<dbReference type="Gene3D" id="1.10.246.80">
    <property type="match status" value="1"/>
</dbReference>
<dbReference type="Gene3D" id="1.20.58.560">
    <property type="match status" value="1"/>
</dbReference>
<dbReference type="Gene3D" id="3.30.460.10">
    <property type="entry name" value="Beta Polymerase, domain 2"/>
    <property type="match status" value="1"/>
</dbReference>
<dbReference type="HAMAP" id="MF_01263">
    <property type="entry name" value="CCA_bact_type3"/>
    <property type="match status" value="1"/>
</dbReference>
<dbReference type="InterPro" id="IPR050264">
    <property type="entry name" value="Bact_CCA-adding_enz_type3_sf"/>
</dbReference>
<dbReference type="InterPro" id="IPR032810">
    <property type="entry name" value="CCA-adding_enz_C"/>
</dbReference>
<dbReference type="InterPro" id="IPR023068">
    <property type="entry name" value="CCA-adding_enz_firmicutes"/>
</dbReference>
<dbReference type="InterPro" id="IPR043519">
    <property type="entry name" value="NT_sf"/>
</dbReference>
<dbReference type="InterPro" id="IPR002646">
    <property type="entry name" value="PolA_pol_head_dom"/>
</dbReference>
<dbReference type="InterPro" id="IPR032828">
    <property type="entry name" value="PolyA_RNA-bd"/>
</dbReference>
<dbReference type="NCBIfam" id="NF009814">
    <property type="entry name" value="PRK13299.1"/>
    <property type="match status" value="1"/>
</dbReference>
<dbReference type="PANTHER" id="PTHR46173">
    <property type="entry name" value="CCA TRNA NUCLEOTIDYLTRANSFERASE 1, MITOCHONDRIAL"/>
    <property type="match status" value="1"/>
</dbReference>
<dbReference type="PANTHER" id="PTHR46173:SF1">
    <property type="entry name" value="CCA TRNA NUCLEOTIDYLTRANSFERASE 1, MITOCHONDRIAL"/>
    <property type="match status" value="1"/>
</dbReference>
<dbReference type="Pfam" id="PF01743">
    <property type="entry name" value="PolyA_pol"/>
    <property type="match status" value="1"/>
</dbReference>
<dbReference type="Pfam" id="PF12627">
    <property type="entry name" value="PolyA_pol_RNAbd"/>
    <property type="match status" value="1"/>
</dbReference>
<dbReference type="Pfam" id="PF13735">
    <property type="entry name" value="tRNA_NucTran2_2"/>
    <property type="match status" value="1"/>
</dbReference>
<dbReference type="SUPFAM" id="SSF81301">
    <property type="entry name" value="Nucleotidyltransferase"/>
    <property type="match status" value="1"/>
</dbReference>
<dbReference type="SUPFAM" id="SSF81891">
    <property type="entry name" value="Poly A polymerase C-terminal region-like"/>
    <property type="match status" value="1"/>
</dbReference>
<feature type="chain" id="PRO_1000165133" description="CCA-adding enzyme">
    <location>
        <begin position="1"/>
        <end position="393"/>
    </location>
</feature>
<feature type="binding site" evidence="1">
    <location>
        <position position="27"/>
    </location>
    <ligand>
        <name>ATP</name>
        <dbReference type="ChEBI" id="CHEBI:30616"/>
    </ligand>
</feature>
<feature type="binding site" evidence="1">
    <location>
        <position position="27"/>
    </location>
    <ligand>
        <name>CTP</name>
        <dbReference type="ChEBI" id="CHEBI:37563"/>
    </ligand>
</feature>
<feature type="binding site" evidence="1">
    <location>
        <position position="30"/>
    </location>
    <ligand>
        <name>ATP</name>
        <dbReference type="ChEBI" id="CHEBI:30616"/>
    </ligand>
</feature>
<feature type="binding site" evidence="1">
    <location>
        <position position="30"/>
    </location>
    <ligand>
        <name>CTP</name>
        <dbReference type="ChEBI" id="CHEBI:37563"/>
    </ligand>
</feature>
<feature type="binding site" evidence="1">
    <location>
        <position position="40"/>
    </location>
    <ligand>
        <name>Mg(2+)</name>
        <dbReference type="ChEBI" id="CHEBI:18420"/>
    </ligand>
</feature>
<feature type="binding site" evidence="1">
    <location>
        <position position="42"/>
    </location>
    <ligand>
        <name>Mg(2+)</name>
        <dbReference type="ChEBI" id="CHEBI:18420"/>
    </ligand>
</feature>
<feature type="binding site" evidence="1">
    <location>
        <position position="111"/>
    </location>
    <ligand>
        <name>ATP</name>
        <dbReference type="ChEBI" id="CHEBI:30616"/>
    </ligand>
</feature>
<feature type="binding site" evidence="1">
    <location>
        <position position="111"/>
    </location>
    <ligand>
        <name>CTP</name>
        <dbReference type="ChEBI" id="CHEBI:37563"/>
    </ligand>
</feature>
<feature type="binding site" evidence="1">
    <location>
        <position position="154"/>
    </location>
    <ligand>
        <name>ATP</name>
        <dbReference type="ChEBI" id="CHEBI:30616"/>
    </ligand>
</feature>
<feature type="binding site" evidence="1">
    <location>
        <position position="154"/>
    </location>
    <ligand>
        <name>CTP</name>
        <dbReference type="ChEBI" id="CHEBI:37563"/>
    </ligand>
</feature>
<feature type="binding site" evidence="1">
    <location>
        <position position="157"/>
    </location>
    <ligand>
        <name>ATP</name>
        <dbReference type="ChEBI" id="CHEBI:30616"/>
    </ligand>
</feature>
<feature type="binding site" evidence="1">
    <location>
        <position position="157"/>
    </location>
    <ligand>
        <name>CTP</name>
        <dbReference type="ChEBI" id="CHEBI:37563"/>
    </ligand>
</feature>
<feature type="binding site" evidence="1">
    <location>
        <position position="160"/>
    </location>
    <ligand>
        <name>ATP</name>
        <dbReference type="ChEBI" id="CHEBI:30616"/>
    </ligand>
</feature>
<feature type="binding site" evidence="1">
    <location>
        <position position="160"/>
    </location>
    <ligand>
        <name>CTP</name>
        <dbReference type="ChEBI" id="CHEBI:37563"/>
    </ligand>
</feature>
<feature type="binding site" evidence="1">
    <location>
        <position position="163"/>
    </location>
    <ligand>
        <name>ATP</name>
        <dbReference type="ChEBI" id="CHEBI:30616"/>
    </ligand>
</feature>
<feature type="binding site" evidence="1">
    <location>
        <position position="163"/>
    </location>
    <ligand>
        <name>CTP</name>
        <dbReference type="ChEBI" id="CHEBI:37563"/>
    </ligand>
</feature>
<evidence type="ECO:0000255" key="1">
    <source>
        <dbReference type="HAMAP-Rule" id="MF_01263"/>
    </source>
</evidence>
<name>CCA_LISMH</name>
<organism>
    <name type="scientific">Listeria monocytogenes serotype 4a (strain HCC23)</name>
    <dbReference type="NCBI Taxonomy" id="552536"/>
    <lineage>
        <taxon>Bacteria</taxon>
        <taxon>Bacillati</taxon>
        <taxon>Bacillota</taxon>
        <taxon>Bacilli</taxon>
        <taxon>Bacillales</taxon>
        <taxon>Listeriaceae</taxon>
        <taxon>Listeria</taxon>
    </lineage>
</organism>
<proteinExistence type="inferred from homology"/>
<gene>
    <name evidence="1" type="primary">cca</name>
    <name type="ordered locus">LMHCC_0652</name>
</gene>